<dbReference type="EMBL" id="AE005174">
    <property type="protein sequence ID" value="AAG55389.1"/>
    <property type="molecule type" value="Genomic_DNA"/>
</dbReference>
<dbReference type="EMBL" id="BA000007">
    <property type="protein sequence ID" value="BAB34410.1"/>
    <property type="molecule type" value="Genomic_DNA"/>
</dbReference>
<dbReference type="PIR" id="A85616">
    <property type="entry name" value="A85616"/>
</dbReference>
<dbReference type="PIR" id="C90752">
    <property type="entry name" value="C90752"/>
</dbReference>
<dbReference type="RefSeq" id="NP_309014.1">
    <property type="nucleotide sequence ID" value="NC_002695.1"/>
</dbReference>
<dbReference type="RefSeq" id="WP_000642546.1">
    <property type="nucleotide sequence ID" value="NZ_VOAI01000006.1"/>
</dbReference>
<dbReference type="PDB" id="3KCU">
    <property type="method" value="X-ray"/>
    <property type="resolution" value="2.24 A"/>
    <property type="chains" value="A/B/C/D/E=1-285"/>
</dbReference>
<dbReference type="PDB" id="3KCV">
    <property type="method" value="X-ray"/>
    <property type="resolution" value="3.20 A"/>
    <property type="chains" value="A/B/C/D/E/F/G/H/I/J=1-285"/>
</dbReference>
<dbReference type="PDBsum" id="3KCU"/>
<dbReference type="PDBsum" id="3KCV"/>
<dbReference type="SMR" id="P0AC25"/>
<dbReference type="DIP" id="DIP-59304N"/>
<dbReference type="STRING" id="155864.Z1250"/>
<dbReference type="GeneID" id="917772"/>
<dbReference type="GeneID" id="93776514"/>
<dbReference type="KEGG" id="ece:Z1250"/>
<dbReference type="KEGG" id="ecs:ECs_0987"/>
<dbReference type="PATRIC" id="fig|386585.9.peg.1106"/>
<dbReference type="eggNOG" id="COG2116">
    <property type="taxonomic scope" value="Bacteria"/>
</dbReference>
<dbReference type="HOGENOM" id="CLU_036896_3_0_6"/>
<dbReference type="OMA" id="MIWFPIM"/>
<dbReference type="EvolutionaryTrace" id="P0AC25"/>
<dbReference type="Proteomes" id="UP000000558">
    <property type="component" value="Chromosome"/>
</dbReference>
<dbReference type="Proteomes" id="UP000002519">
    <property type="component" value="Chromosome"/>
</dbReference>
<dbReference type="GO" id="GO:0005886">
    <property type="term" value="C:plasma membrane"/>
    <property type="evidence" value="ECO:0007669"/>
    <property type="project" value="UniProtKB-SubCell"/>
</dbReference>
<dbReference type="GO" id="GO:0015499">
    <property type="term" value="F:formate transmembrane transporter activity"/>
    <property type="evidence" value="ECO:0007669"/>
    <property type="project" value="InterPro"/>
</dbReference>
<dbReference type="GO" id="GO:0042802">
    <property type="term" value="F:identical protein binding"/>
    <property type="evidence" value="ECO:0000353"/>
    <property type="project" value="IntAct"/>
</dbReference>
<dbReference type="FunFam" id="1.20.1080.10:FF:000006">
    <property type="entry name" value="Formate transporter FocA"/>
    <property type="match status" value="1"/>
</dbReference>
<dbReference type="Gene3D" id="1.20.1080.10">
    <property type="entry name" value="Glycerol uptake facilitator protein"/>
    <property type="match status" value="1"/>
</dbReference>
<dbReference type="InterPro" id="IPR023271">
    <property type="entry name" value="Aquaporin-like"/>
</dbReference>
<dbReference type="InterPro" id="IPR000292">
    <property type="entry name" value="For/NO2_transpt"/>
</dbReference>
<dbReference type="InterPro" id="IPR024002">
    <property type="entry name" value="For/NO2_transpt_CS"/>
</dbReference>
<dbReference type="InterPro" id="IPR023999">
    <property type="entry name" value="Formate_transptr_FocA"/>
</dbReference>
<dbReference type="NCBIfam" id="TIGR00790">
    <property type="entry name" value="fnt"/>
    <property type="match status" value="1"/>
</dbReference>
<dbReference type="NCBIfam" id="TIGR04060">
    <property type="entry name" value="formate_focA"/>
    <property type="match status" value="1"/>
</dbReference>
<dbReference type="NCBIfam" id="NF008069">
    <property type="entry name" value="PRK10805.1"/>
    <property type="match status" value="1"/>
</dbReference>
<dbReference type="PANTHER" id="PTHR30520:SF10">
    <property type="entry name" value="FORMATE CHANNEL FOCA-RELATED"/>
    <property type="match status" value="1"/>
</dbReference>
<dbReference type="PANTHER" id="PTHR30520">
    <property type="entry name" value="FORMATE TRANSPORTER-RELATED"/>
    <property type="match status" value="1"/>
</dbReference>
<dbReference type="Pfam" id="PF01226">
    <property type="entry name" value="Form_Nir_trans"/>
    <property type="match status" value="1"/>
</dbReference>
<dbReference type="PROSITE" id="PS01005">
    <property type="entry name" value="FORMATE_NITRITE_TP_1"/>
    <property type="match status" value="1"/>
</dbReference>
<dbReference type="PROSITE" id="PS01006">
    <property type="entry name" value="FORMATE_NITRITE_TP_2"/>
    <property type="match status" value="1"/>
</dbReference>
<name>FOCA_ECO57</name>
<sequence>MKADNPFDLLLPAAMAKVAEEAGVYKATKHPLKTFYLAITAGVFISIAFVFYITATTGTGTMPFGMAKLVGGICFSLGLILCVVCGADLFTSTVLIVVAKASGRITWGQLAKNWLNVYFGNLVGALLFVLLMWLSGEYMTANGQWGLNVLQTADHKVHHTFIEAVCLGILANLMVCLAVWMSYSGRSLMDKAFIMVLPVAMFVASGFEHSIANMFMIPMGIVIRDFASPEFWTAVGSAPENFSHLTVMNFITDNLIPVTIGNIIGGGLLVGLTYWVIYLRENDHH</sequence>
<gene>
    <name evidence="3" type="primary">focA</name>
    <name type="ordered locus">Z1250</name>
    <name type="ordered locus">ECs0987</name>
</gene>
<reference key="1">
    <citation type="journal article" date="2001" name="Nature">
        <title>Genome sequence of enterohaemorrhagic Escherichia coli O157:H7.</title>
        <authorList>
            <person name="Perna N.T."/>
            <person name="Plunkett G. III"/>
            <person name="Burland V."/>
            <person name="Mau B."/>
            <person name="Glasner J.D."/>
            <person name="Rose D.J."/>
            <person name="Mayhew G.F."/>
            <person name="Evans P.S."/>
            <person name="Gregor J."/>
            <person name="Kirkpatrick H.A."/>
            <person name="Posfai G."/>
            <person name="Hackett J."/>
            <person name="Klink S."/>
            <person name="Boutin A."/>
            <person name="Shao Y."/>
            <person name="Miller L."/>
            <person name="Grotbeck E.J."/>
            <person name="Davis N.W."/>
            <person name="Lim A."/>
            <person name="Dimalanta E.T."/>
            <person name="Potamousis K."/>
            <person name="Apodaca J."/>
            <person name="Anantharaman T.S."/>
            <person name="Lin J."/>
            <person name="Yen G."/>
            <person name="Schwartz D.C."/>
            <person name="Welch R.A."/>
            <person name="Blattner F.R."/>
        </authorList>
    </citation>
    <scope>NUCLEOTIDE SEQUENCE [LARGE SCALE GENOMIC DNA]</scope>
    <source>
        <strain>O157:H7 / EDL933 / ATCC 700927 / EHEC</strain>
    </source>
</reference>
<reference key="2">
    <citation type="journal article" date="2001" name="DNA Res.">
        <title>Complete genome sequence of enterohemorrhagic Escherichia coli O157:H7 and genomic comparison with a laboratory strain K-12.</title>
        <authorList>
            <person name="Hayashi T."/>
            <person name="Makino K."/>
            <person name="Ohnishi M."/>
            <person name="Kurokawa K."/>
            <person name="Ishii K."/>
            <person name="Yokoyama K."/>
            <person name="Han C.-G."/>
            <person name="Ohtsubo E."/>
            <person name="Nakayama K."/>
            <person name="Murata T."/>
            <person name="Tanaka M."/>
            <person name="Tobe T."/>
            <person name="Iida T."/>
            <person name="Takami H."/>
            <person name="Honda T."/>
            <person name="Sasakawa C."/>
            <person name="Ogasawara N."/>
            <person name="Yasunaga T."/>
            <person name="Kuhara S."/>
            <person name="Shiba T."/>
            <person name="Hattori M."/>
            <person name="Shinagawa H."/>
        </authorList>
    </citation>
    <scope>NUCLEOTIDE SEQUENCE [LARGE SCALE GENOMIC DNA]</scope>
    <source>
        <strain>O157:H7 / Sakai / RIMD 0509952 / EHEC</strain>
    </source>
</reference>
<reference evidence="5 6" key="3">
    <citation type="journal article" date="2009" name="Nature">
        <title>Structure of the formate transporter FocA reveals a pentameric aquaporin-like channel.</title>
        <authorList>
            <person name="Wang Y."/>
            <person name="Huang Y."/>
            <person name="Wang J."/>
            <person name="Cheng C."/>
            <person name="Huang W."/>
            <person name="Lu P."/>
            <person name="Xu Y.N."/>
            <person name="Wang P."/>
            <person name="Yan N."/>
            <person name="Shi Y."/>
        </authorList>
    </citation>
    <scope>X-RAY CRYSTALLOGRAPHY (2.24 ANGSTROMS)</scope>
    <scope>FUNCTION</scope>
    <scope>CATALYTIC ACTIVITY</scope>
    <scope>SUBUNIT</scope>
    <scope>SUBCELLULAR LOCATION</scope>
    <scope>TOPOLOGY</scope>
    <scope>DOMAIN</scope>
    <scope>MUTAGENESIS OF LEU-79; LEU-89 AND PHE-202</scope>
    <source>
        <strain>O157:H7 / EHEC</strain>
    </source>
</reference>
<organism>
    <name type="scientific">Escherichia coli O157:H7</name>
    <dbReference type="NCBI Taxonomy" id="83334"/>
    <lineage>
        <taxon>Bacteria</taxon>
        <taxon>Pseudomonadati</taxon>
        <taxon>Pseudomonadota</taxon>
        <taxon>Gammaproteobacteria</taxon>
        <taxon>Enterobacterales</taxon>
        <taxon>Enterobacteriaceae</taxon>
        <taxon>Escherichia</taxon>
    </lineage>
</organism>
<protein>
    <recommendedName>
        <fullName evidence="4">Formate channel FocA</fullName>
    </recommendedName>
    <alternativeName>
        <fullName evidence="3">Formate transporter FocA</fullName>
    </alternativeName>
</protein>
<proteinExistence type="evidence at protein level"/>
<feature type="chain" id="PRO_0000094718" description="Formate channel FocA">
    <location>
        <begin position="1"/>
        <end position="285"/>
    </location>
</feature>
<feature type="topological domain" description="Cytoplasmic" evidence="2 5 6">
    <location>
        <begin position="1"/>
        <end position="30"/>
    </location>
</feature>
<feature type="transmembrane region" description="Helical" evidence="2 5 6">
    <location>
        <begin position="31"/>
        <end position="56"/>
    </location>
</feature>
<feature type="topological domain" description="Periplasmic" evidence="2 5 6">
    <location>
        <begin position="57"/>
        <end position="64"/>
    </location>
</feature>
<feature type="transmembrane region" description="Helical" evidence="2 5 6">
    <location>
        <begin position="65"/>
        <end position="85"/>
    </location>
</feature>
<feature type="topological domain" description="Cytoplasmic" evidence="2 5 6">
    <location>
        <begin position="86"/>
        <end position="112"/>
    </location>
</feature>
<feature type="transmembrane region" description="Helical" evidence="2 5 6">
    <location>
        <begin position="113"/>
        <end position="135"/>
    </location>
</feature>
<feature type="topological domain" description="Periplasmic" evidence="2 5 6">
    <location>
        <begin position="136"/>
        <end position="160"/>
    </location>
</feature>
<feature type="transmembrane region" description="Helical" evidence="2 5 6">
    <location>
        <begin position="161"/>
        <end position="181"/>
    </location>
</feature>
<feature type="topological domain" description="Cytoplasmic" evidence="2 5 6">
    <location>
        <begin position="182"/>
        <end position="187"/>
    </location>
</feature>
<feature type="transmembrane region" description="Helical" evidence="2 5 6">
    <location>
        <begin position="188"/>
        <end position="205"/>
    </location>
</feature>
<feature type="topological domain" description="Periplasmic" evidence="2 5 6">
    <location>
        <begin position="206"/>
        <end position="249"/>
    </location>
</feature>
<feature type="transmembrane region" description="Helical" evidence="2 5 6">
    <location>
        <begin position="250"/>
        <end position="276"/>
    </location>
</feature>
<feature type="topological domain" description="Cytoplasmic" evidence="2 5 6">
    <location>
        <begin position="277"/>
        <end position="285"/>
    </location>
</feature>
<feature type="site" description="Important for formate translocation" evidence="1">
    <location>
        <position position="91"/>
    </location>
</feature>
<feature type="site" description="Important for formate translocation" evidence="1">
    <location>
        <position position="209"/>
    </location>
</feature>
<feature type="mutagenesis site" description="Shows a markedly increased capacity for formate passage; when associated with V-89." evidence="2">
    <original>L</original>
    <variation>V</variation>
    <location>
        <position position="79"/>
    </location>
</feature>
<feature type="mutagenesis site" description="Shows a markedly increased capacity for formate passage; when associated with V-79." evidence="2">
    <original>L</original>
    <variation>V</variation>
    <location>
        <position position="89"/>
    </location>
</feature>
<feature type="mutagenesis site" description="Shows a markedly increased capacity for formate passage." evidence="2">
    <original>F</original>
    <variation>A</variation>
    <location>
        <position position="202"/>
    </location>
</feature>
<feature type="helix" evidence="7">
    <location>
        <begin position="31"/>
        <end position="56"/>
    </location>
</feature>
<feature type="turn" evidence="7">
    <location>
        <begin position="57"/>
        <end position="60"/>
    </location>
</feature>
<feature type="helix" evidence="7">
    <location>
        <begin position="64"/>
        <end position="75"/>
    </location>
</feature>
<feature type="helix" evidence="7">
    <location>
        <begin position="77"/>
        <end position="85"/>
    </location>
</feature>
<feature type="turn" evidence="7">
    <location>
        <begin position="90"/>
        <end position="93"/>
    </location>
</feature>
<feature type="helix" evidence="7">
    <location>
        <begin position="94"/>
        <end position="100"/>
    </location>
</feature>
<feature type="turn" evidence="7">
    <location>
        <begin position="101"/>
        <end position="103"/>
    </location>
</feature>
<feature type="helix" evidence="7">
    <location>
        <begin position="107"/>
        <end position="110"/>
    </location>
</feature>
<feature type="turn" evidence="7">
    <location>
        <begin position="111"/>
        <end position="113"/>
    </location>
</feature>
<feature type="helix" evidence="7">
    <location>
        <begin position="114"/>
        <end position="135"/>
    </location>
</feature>
<feature type="helix" evidence="7">
    <location>
        <begin position="137"/>
        <end position="139"/>
    </location>
</feature>
<feature type="turn" evidence="7">
    <location>
        <begin position="140"/>
        <end position="143"/>
    </location>
</feature>
<feature type="helix" evidence="7">
    <location>
        <begin position="144"/>
        <end position="155"/>
    </location>
</feature>
<feature type="helix" evidence="7">
    <location>
        <begin position="161"/>
        <end position="182"/>
    </location>
</feature>
<feature type="helix" evidence="7">
    <location>
        <begin position="188"/>
        <end position="193"/>
    </location>
</feature>
<feature type="helix" evidence="7">
    <location>
        <begin position="196"/>
        <end position="204"/>
    </location>
</feature>
<feature type="helix" evidence="7">
    <location>
        <begin position="210"/>
        <end position="226"/>
    </location>
</feature>
<feature type="helix" evidence="7">
    <location>
        <begin position="229"/>
        <end position="234"/>
    </location>
</feature>
<feature type="helix" evidence="7">
    <location>
        <begin position="239"/>
        <end position="242"/>
    </location>
</feature>
<feature type="helix" evidence="7">
    <location>
        <begin position="247"/>
        <end position="253"/>
    </location>
</feature>
<feature type="helix" evidence="7">
    <location>
        <begin position="255"/>
        <end position="278"/>
    </location>
</feature>
<evidence type="ECO:0000250" key="1">
    <source>
        <dbReference type="UniProtKB" id="P0AC23"/>
    </source>
</evidence>
<evidence type="ECO:0000269" key="2">
    <source>
    </source>
</evidence>
<evidence type="ECO:0000303" key="3">
    <source>
    </source>
</evidence>
<evidence type="ECO:0000305" key="4"/>
<evidence type="ECO:0007744" key="5">
    <source>
        <dbReference type="PDB" id="3KCU"/>
    </source>
</evidence>
<evidence type="ECO:0007744" key="6">
    <source>
        <dbReference type="PDB" id="3KCV"/>
    </source>
</evidence>
<evidence type="ECO:0007829" key="7">
    <source>
        <dbReference type="PDB" id="3KCU"/>
    </source>
</evidence>
<keyword id="KW-0002">3D-structure</keyword>
<keyword id="KW-0997">Cell inner membrane</keyword>
<keyword id="KW-1003">Cell membrane</keyword>
<keyword id="KW-0472">Membrane</keyword>
<keyword id="KW-1185">Reference proteome</keyword>
<keyword id="KW-0812">Transmembrane</keyword>
<keyword id="KW-1133">Transmembrane helix</keyword>
<keyword id="KW-0813">Transport</keyword>
<comment type="function">
    <text evidence="1 2">Involved in the bidirectional transport of formate during mixed-acid fermentation (PubMed:19940917). Functions to maintain relatively constant intracellular formate levels during growth, using different mechanisms for efflux and uptake of the anion (By similarity). Is impermeable to water (PubMed:19940917).</text>
</comment>
<comment type="catalytic activity">
    <reaction evidence="2">
        <text>formate(in) = formate(out)</text>
        <dbReference type="Rhea" id="RHEA:29679"/>
        <dbReference type="ChEBI" id="CHEBI:15740"/>
    </reaction>
</comment>
<comment type="subunit">
    <text evidence="2">Homopentamer.</text>
</comment>
<comment type="interaction">
    <interactant intactId="EBI-15817706">
        <id>P0AC25</id>
    </interactant>
    <interactant intactId="EBI-15817706">
        <id>P0AC25</id>
        <label>focA</label>
    </interactant>
    <organismsDiffer>false</organismsDiffer>
    <experiments>3</experiments>
</comment>
<comment type="subcellular location">
    <subcellularLocation>
        <location evidence="2">Cell inner membrane</location>
        <topology evidence="2">Multi-pass membrane protein</topology>
    </subcellularLocation>
</comment>
<comment type="domain">
    <text evidence="2">Contains two constriction sites and may exist in a closed pore state.</text>
</comment>
<comment type="similarity">
    <text evidence="4">Belongs to the FNT transporter (TC 1.A.16) family.</text>
</comment>
<accession>P0AC25</accession>
<accession>P21501</accession>